<sequence length="335" mass="36616">MSPSATDNSDGPDATVLTLRKVLTSESEPLARRFRALFSLKYLACQQPATEKTLPAIQAIAAAFTSPSALLKHELAYCLGQTRNPESVPYLQEVVKDTEQDTMCRHEAAEALGALGYEDSLEILKVLRDNKDEPDVIRETCDIAVDRILWENSEQRKAEKLKASDFTSIDPAPPLPMATSEPSIPDIEKRLLDTSLPLFQRYRAMFALRDLASPPDLPTATHAVEALAKGLKDPSALFRHEIAFVFGQLSHPASIPSLTEALSDQNEVGMVRHEAAEALGSLGDCEGVEDTLKKFLNDPEQVVRDSVIVALDMAEYEKNGEIEYALVPDSGVAAA</sequence>
<organism>
    <name type="scientific">Aspergillus clavatus (strain ATCC 1007 / CBS 513.65 / DSM 816 / NCTC 3887 / NRRL 1 / QM 1276 / 107)</name>
    <dbReference type="NCBI Taxonomy" id="344612"/>
    <lineage>
        <taxon>Eukaryota</taxon>
        <taxon>Fungi</taxon>
        <taxon>Dikarya</taxon>
        <taxon>Ascomycota</taxon>
        <taxon>Pezizomycotina</taxon>
        <taxon>Eurotiomycetes</taxon>
        <taxon>Eurotiomycetidae</taxon>
        <taxon>Eurotiales</taxon>
        <taxon>Aspergillaceae</taxon>
        <taxon>Aspergillus</taxon>
        <taxon>Aspergillus subgen. Fumigati</taxon>
    </lineage>
</organism>
<feature type="chain" id="PRO_0000283654" description="Deoxyhypusine hydroxylase">
    <location>
        <begin position="1"/>
        <end position="335"/>
    </location>
</feature>
<feature type="repeat" description="HEAT-like PBS-type 1">
    <location>
        <begin position="71"/>
        <end position="97"/>
    </location>
</feature>
<feature type="repeat" description="HEAT-like PBS-type 2">
    <location>
        <begin position="104"/>
        <end position="130"/>
    </location>
</feature>
<feature type="repeat" description="HEAT-like PBS-type 3">
    <location>
        <begin position="200"/>
        <end position="233"/>
    </location>
</feature>
<feature type="repeat" description="HEAT-like PBS-type 4">
    <location>
        <begin position="238"/>
        <end position="264"/>
    </location>
</feature>
<feature type="repeat" description="HEAT-like PBS-type 5">
    <location>
        <begin position="271"/>
        <end position="298"/>
    </location>
</feature>
<feature type="binding site" evidence="1">
    <location>
        <position position="73"/>
    </location>
    <ligand>
        <name>Fe cation</name>
        <dbReference type="ChEBI" id="CHEBI:24875"/>
        <label>1</label>
    </ligand>
</feature>
<feature type="binding site" evidence="1">
    <location>
        <position position="74"/>
    </location>
    <ligand>
        <name>Fe cation</name>
        <dbReference type="ChEBI" id="CHEBI:24875"/>
        <label>1</label>
    </ligand>
</feature>
<feature type="binding site" evidence="1">
    <location>
        <position position="106"/>
    </location>
    <ligand>
        <name>Fe cation</name>
        <dbReference type="ChEBI" id="CHEBI:24875"/>
        <label>1</label>
    </ligand>
</feature>
<feature type="binding site" evidence="1">
    <location>
        <position position="107"/>
    </location>
    <ligand>
        <name>Fe cation</name>
        <dbReference type="ChEBI" id="CHEBI:24875"/>
        <label>1</label>
    </ligand>
</feature>
<feature type="binding site" evidence="1">
    <location>
        <position position="240"/>
    </location>
    <ligand>
        <name>Fe cation</name>
        <dbReference type="ChEBI" id="CHEBI:24875"/>
        <label>2</label>
    </ligand>
</feature>
<feature type="binding site" evidence="1">
    <location>
        <position position="241"/>
    </location>
    <ligand>
        <name>Fe cation</name>
        <dbReference type="ChEBI" id="CHEBI:24875"/>
        <label>2</label>
    </ligand>
</feature>
<feature type="binding site" evidence="1">
    <location>
        <position position="273"/>
    </location>
    <ligand>
        <name>Fe cation</name>
        <dbReference type="ChEBI" id="CHEBI:24875"/>
        <label>2</label>
    </ligand>
</feature>
<feature type="binding site" evidence="1">
    <location>
        <position position="274"/>
    </location>
    <ligand>
        <name>Fe cation</name>
        <dbReference type="ChEBI" id="CHEBI:24875"/>
        <label>2</label>
    </ligand>
</feature>
<reference key="1">
    <citation type="journal article" date="2008" name="PLoS Genet.">
        <title>Genomic islands in the pathogenic filamentous fungus Aspergillus fumigatus.</title>
        <authorList>
            <person name="Fedorova N.D."/>
            <person name="Khaldi N."/>
            <person name="Joardar V.S."/>
            <person name="Maiti R."/>
            <person name="Amedeo P."/>
            <person name="Anderson M.J."/>
            <person name="Crabtree J."/>
            <person name="Silva J.C."/>
            <person name="Badger J.H."/>
            <person name="Albarraq A."/>
            <person name="Angiuoli S."/>
            <person name="Bussey H."/>
            <person name="Bowyer P."/>
            <person name="Cotty P.J."/>
            <person name="Dyer P.S."/>
            <person name="Egan A."/>
            <person name="Galens K."/>
            <person name="Fraser-Liggett C.M."/>
            <person name="Haas B.J."/>
            <person name="Inman J.M."/>
            <person name="Kent R."/>
            <person name="Lemieux S."/>
            <person name="Malavazi I."/>
            <person name="Orvis J."/>
            <person name="Roemer T."/>
            <person name="Ronning C.M."/>
            <person name="Sundaram J.P."/>
            <person name="Sutton G."/>
            <person name="Turner G."/>
            <person name="Venter J.C."/>
            <person name="White O.R."/>
            <person name="Whitty B.R."/>
            <person name="Youngman P."/>
            <person name="Wolfe K.H."/>
            <person name="Goldman G.H."/>
            <person name="Wortman J.R."/>
            <person name="Jiang B."/>
            <person name="Denning D.W."/>
            <person name="Nierman W.C."/>
        </authorList>
    </citation>
    <scope>NUCLEOTIDE SEQUENCE [LARGE SCALE GENOMIC DNA]</scope>
    <source>
        <strain>ATCC 1007 / CBS 513.65 / DSM 816 / NCTC 3887 / NRRL 1 / QM 1276 / 107</strain>
    </source>
</reference>
<name>DOHH_ASPCL</name>
<proteinExistence type="inferred from homology"/>
<protein>
    <recommendedName>
        <fullName evidence="1">Deoxyhypusine hydroxylase</fullName>
        <shortName evidence="1">DOHH</shortName>
        <ecNumber evidence="1">1.14.99.29</ecNumber>
    </recommendedName>
    <alternativeName>
        <fullName evidence="1">Deoxyhypusine dioxygenase</fullName>
    </alternativeName>
    <alternativeName>
        <fullName evidence="1">Deoxyhypusine monooxygenase</fullName>
    </alternativeName>
</protein>
<gene>
    <name type="primary">lia1</name>
    <name type="ORF">ACLA_089210</name>
</gene>
<dbReference type="EC" id="1.14.99.29" evidence="1"/>
<dbReference type="EMBL" id="DS027052">
    <property type="protein sequence ID" value="EAW11229.1"/>
    <property type="molecule type" value="Genomic_DNA"/>
</dbReference>
<dbReference type="RefSeq" id="XP_001272655.1">
    <property type="nucleotide sequence ID" value="XM_001272654.1"/>
</dbReference>
<dbReference type="SMR" id="A1CED0"/>
<dbReference type="STRING" id="344612.A1CED0"/>
<dbReference type="EnsemblFungi" id="EAW11229">
    <property type="protein sequence ID" value="EAW11229"/>
    <property type="gene ID" value="ACLA_089210"/>
</dbReference>
<dbReference type="GeneID" id="4705319"/>
<dbReference type="KEGG" id="act:ACLA_089210"/>
<dbReference type="VEuPathDB" id="FungiDB:ACLA_089210"/>
<dbReference type="eggNOG" id="KOG0567">
    <property type="taxonomic scope" value="Eukaryota"/>
</dbReference>
<dbReference type="HOGENOM" id="CLU_053974_0_0_1"/>
<dbReference type="OMA" id="LQEPCSI"/>
<dbReference type="OrthoDB" id="421002at2759"/>
<dbReference type="UniPathway" id="UPA00354"/>
<dbReference type="Proteomes" id="UP000006701">
    <property type="component" value="Unassembled WGS sequence"/>
</dbReference>
<dbReference type="GO" id="GO:0005737">
    <property type="term" value="C:cytoplasm"/>
    <property type="evidence" value="ECO:0007669"/>
    <property type="project" value="UniProtKB-SubCell"/>
</dbReference>
<dbReference type="GO" id="GO:0005634">
    <property type="term" value="C:nucleus"/>
    <property type="evidence" value="ECO:0007669"/>
    <property type="project" value="UniProtKB-SubCell"/>
</dbReference>
<dbReference type="GO" id="GO:0019135">
    <property type="term" value="F:deoxyhypusine monooxygenase activity"/>
    <property type="evidence" value="ECO:0007669"/>
    <property type="project" value="UniProtKB-UniRule"/>
</dbReference>
<dbReference type="GO" id="GO:0046872">
    <property type="term" value="F:metal ion binding"/>
    <property type="evidence" value="ECO:0007669"/>
    <property type="project" value="UniProtKB-KW"/>
</dbReference>
<dbReference type="Gene3D" id="1.25.10.10">
    <property type="entry name" value="Leucine-rich Repeat Variant"/>
    <property type="match status" value="2"/>
</dbReference>
<dbReference type="HAMAP" id="MF_03101">
    <property type="entry name" value="Deoxyhypusine_hydroxylase"/>
    <property type="match status" value="1"/>
</dbReference>
<dbReference type="InterPro" id="IPR011989">
    <property type="entry name" value="ARM-like"/>
</dbReference>
<dbReference type="InterPro" id="IPR016024">
    <property type="entry name" value="ARM-type_fold"/>
</dbReference>
<dbReference type="InterPro" id="IPR027517">
    <property type="entry name" value="Deoxyhypusine_hydroxylase"/>
</dbReference>
<dbReference type="InterPro" id="IPR021133">
    <property type="entry name" value="HEAT_type_2"/>
</dbReference>
<dbReference type="InterPro" id="IPR004155">
    <property type="entry name" value="PBS_lyase_HEAT"/>
</dbReference>
<dbReference type="PANTHER" id="PTHR12697:SF5">
    <property type="entry name" value="DEOXYHYPUSINE HYDROXYLASE"/>
    <property type="match status" value="1"/>
</dbReference>
<dbReference type="PANTHER" id="PTHR12697">
    <property type="entry name" value="PBS LYASE HEAT-LIKE PROTEIN"/>
    <property type="match status" value="1"/>
</dbReference>
<dbReference type="Pfam" id="PF13646">
    <property type="entry name" value="HEAT_2"/>
    <property type="match status" value="2"/>
</dbReference>
<dbReference type="SMART" id="SM00567">
    <property type="entry name" value="EZ_HEAT"/>
    <property type="match status" value="5"/>
</dbReference>
<dbReference type="SUPFAM" id="SSF48371">
    <property type="entry name" value="ARM repeat"/>
    <property type="match status" value="1"/>
</dbReference>
<dbReference type="PROSITE" id="PS50077">
    <property type="entry name" value="HEAT_REPEAT"/>
    <property type="match status" value="1"/>
</dbReference>
<evidence type="ECO:0000255" key="1">
    <source>
        <dbReference type="HAMAP-Rule" id="MF_03101"/>
    </source>
</evidence>
<comment type="function">
    <text evidence="1">Catalyzes the hydroxylation of the N(6)-(4-aminobutyl)-L-lysine intermediate to form hypusine, an essential post-translational modification only found in mature eIF-5A factor.</text>
</comment>
<comment type="catalytic activity">
    <reaction evidence="1">
        <text>[eIF5A protein]-deoxyhypusine + AH2 + O2 = [eIF5A protein]-hypusine + A + H2O</text>
        <dbReference type="Rhea" id="RHEA:14101"/>
        <dbReference type="Rhea" id="RHEA-COMP:10144"/>
        <dbReference type="Rhea" id="RHEA-COMP:12592"/>
        <dbReference type="ChEBI" id="CHEBI:13193"/>
        <dbReference type="ChEBI" id="CHEBI:15377"/>
        <dbReference type="ChEBI" id="CHEBI:15379"/>
        <dbReference type="ChEBI" id="CHEBI:17499"/>
        <dbReference type="ChEBI" id="CHEBI:82657"/>
        <dbReference type="ChEBI" id="CHEBI:91175"/>
        <dbReference type="EC" id="1.14.99.29"/>
    </reaction>
</comment>
<comment type="cofactor">
    <cofactor evidence="1">
        <name>Fe(2+)</name>
        <dbReference type="ChEBI" id="CHEBI:29033"/>
    </cofactor>
    <text evidence="1">Binds 2 Fe(2+) ions per subunit.</text>
</comment>
<comment type="pathway">
    <text evidence="1">Protein modification; eIF5A hypusination.</text>
</comment>
<comment type="subcellular location">
    <subcellularLocation>
        <location evidence="1">Cytoplasm</location>
    </subcellularLocation>
    <subcellularLocation>
        <location evidence="1">Nucleus</location>
    </subcellularLocation>
</comment>
<comment type="similarity">
    <text evidence="1">Belongs to the deoxyhypusine hydroxylase family.</text>
</comment>
<keyword id="KW-0963">Cytoplasm</keyword>
<keyword id="KW-0386">Hypusine biosynthesis</keyword>
<keyword id="KW-0408">Iron</keyword>
<keyword id="KW-0479">Metal-binding</keyword>
<keyword id="KW-0503">Monooxygenase</keyword>
<keyword id="KW-0539">Nucleus</keyword>
<keyword id="KW-0560">Oxidoreductase</keyword>
<keyword id="KW-1185">Reference proteome</keyword>
<keyword id="KW-0677">Repeat</keyword>
<accession>A1CED0</accession>